<gene>
    <name evidence="1" type="primary">hscA</name>
    <name type="ordered locus">ECED1_2957</name>
</gene>
<organism>
    <name type="scientific">Escherichia coli O81 (strain ED1a)</name>
    <dbReference type="NCBI Taxonomy" id="585397"/>
    <lineage>
        <taxon>Bacteria</taxon>
        <taxon>Pseudomonadati</taxon>
        <taxon>Pseudomonadota</taxon>
        <taxon>Gammaproteobacteria</taxon>
        <taxon>Enterobacterales</taxon>
        <taxon>Enterobacteriaceae</taxon>
        <taxon>Escherichia</taxon>
    </lineage>
</organism>
<comment type="function">
    <text evidence="1">Chaperone involved in the maturation of iron-sulfur cluster-containing proteins. Has a low intrinsic ATPase activity which is markedly stimulated by HscB. Involved in the maturation of IscU.</text>
</comment>
<comment type="similarity">
    <text evidence="1">Belongs to the heat shock protein 70 family.</text>
</comment>
<sequence length="616" mass="65652">MALLQISEPGLSAAPHQRRLAAGIDLGTTNSLVATVRSGQAETLADHEGRHLLPSVVHYQQQGHSVGYDARTNAALDTANTISSVKRLMGRSLADIQQRYPHLPYQFQASENGLPMIETAAGLLNPVRVSADILKALAARATEALAGELDGVVITVPAYFDDAQRQGTKDAARLAGLHVLRLLNEPTAAAIAYGLDSGQEGVIAVYDLGGGTFDISILRLSRGVFEVLATGGDSALGGDDFDHLLADYIREQAGIPDRSDNRVQRELLDAAIAAKIALSDADSVTVNVAGWQGEISREQFNELIAPLVKRTLLACRRALKDAGVEADEVLEVVMVGGSTRVPLVRERVGEFFGRPPLTSIDPDKVVAIGAAIQADILVGNKPDSEMLLLDVIPLSLGLETMGGLVEKVIPRNTTIPVARAQDFTTFKDGQTAMSIHVMQGERELVQDCRSLARFALRGIPALPAGGAHIRVTFQVDADGLLSVTAMEKSTGVEASIQVKPSYGLTDSEIASMIKDSMSYAEQDVKARMLAEQKVEAARVLESLHGALAADAALLSAAERQVIDDAAAHLSEVAQGDDVDAIEQAIKNVDKQTQDFAARRMDQSVRRALKGHSVDEV</sequence>
<proteinExistence type="inferred from homology"/>
<protein>
    <recommendedName>
        <fullName evidence="1">Chaperone protein HscA</fullName>
    </recommendedName>
    <alternativeName>
        <fullName evidence="1">Hsc66</fullName>
    </alternativeName>
</protein>
<evidence type="ECO:0000255" key="1">
    <source>
        <dbReference type="HAMAP-Rule" id="MF_00679"/>
    </source>
</evidence>
<accession>B7MY19</accession>
<dbReference type="EMBL" id="CU928162">
    <property type="protein sequence ID" value="CAR08985.1"/>
    <property type="molecule type" value="Genomic_DNA"/>
</dbReference>
<dbReference type="RefSeq" id="WP_001196613.1">
    <property type="nucleotide sequence ID" value="NC_011745.1"/>
</dbReference>
<dbReference type="SMR" id="B7MY19"/>
<dbReference type="GeneID" id="93774610"/>
<dbReference type="KEGG" id="ecq:ECED1_2957"/>
<dbReference type="HOGENOM" id="CLU_005965_2_1_6"/>
<dbReference type="Proteomes" id="UP000000748">
    <property type="component" value="Chromosome"/>
</dbReference>
<dbReference type="GO" id="GO:0005524">
    <property type="term" value="F:ATP binding"/>
    <property type="evidence" value="ECO:0007669"/>
    <property type="project" value="UniProtKB-KW"/>
</dbReference>
<dbReference type="GO" id="GO:0016887">
    <property type="term" value="F:ATP hydrolysis activity"/>
    <property type="evidence" value="ECO:0007669"/>
    <property type="project" value="UniProtKB-UniRule"/>
</dbReference>
<dbReference type="GO" id="GO:0140662">
    <property type="term" value="F:ATP-dependent protein folding chaperone"/>
    <property type="evidence" value="ECO:0007669"/>
    <property type="project" value="InterPro"/>
</dbReference>
<dbReference type="GO" id="GO:0051082">
    <property type="term" value="F:unfolded protein binding"/>
    <property type="evidence" value="ECO:0007669"/>
    <property type="project" value="InterPro"/>
</dbReference>
<dbReference type="GO" id="GO:0016226">
    <property type="term" value="P:iron-sulfur cluster assembly"/>
    <property type="evidence" value="ECO:0007669"/>
    <property type="project" value="InterPro"/>
</dbReference>
<dbReference type="CDD" id="cd10236">
    <property type="entry name" value="ASKHA_NBD_HSP70_HscA"/>
    <property type="match status" value="1"/>
</dbReference>
<dbReference type="FunFam" id="1.20.1270.10:FF:000006">
    <property type="entry name" value="Chaperone protein HscA"/>
    <property type="match status" value="1"/>
</dbReference>
<dbReference type="FunFam" id="3.30.420.40:FF:000046">
    <property type="entry name" value="Chaperone protein HscA"/>
    <property type="match status" value="1"/>
</dbReference>
<dbReference type="FunFam" id="3.90.640.10:FF:000013">
    <property type="entry name" value="Chaperone protein HscA"/>
    <property type="match status" value="1"/>
</dbReference>
<dbReference type="FunFam" id="2.60.34.10:FF:000005">
    <property type="entry name" value="Chaperone protein HscA homolog"/>
    <property type="match status" value="1"/>
</dbReference>
<dbReference type="FunFam" id="3.30.420.40:FF:000020">
    <property type="entry name" value="Chaperone protein HscA homolog"/>
    <property type="match status" value="1"/>
</dbReference>
<dbReference type="Gene3D" id="1.20.1270.10">
    <property type="match status" value="1"/>
</dbReference>
<dbReference type="Gene3D" id="3.30.420.40">
    <property type="match status" value="2"/>
</dbReference>
<dbReference type="Gene3D" id="3.90.640.10">
    <property type="entry name" value="Actin, Chain A, domain 4"/>
    <property type="match status" value="1"/>
</dbReference>
<dbReference type="Gene3D" id="2.60.34.10">
    <property type="entry name" value="Substrate Binding Domain Of DNAk, Chain A, domain 1"/>
    <property type="match status" value="1"/>
</dbReference>
<dbReference type="HAMAP" id="MF_00679">
    <property type="entry name" value="HscA"/>
    <property type="match status" value="1"/>
</dbReference>
<dbReference type="InterPro" id="IPR043129">
    <property type="entry name" value="ATPase_NBD"/>
</dbReference>
<dbReference type="InterPro" id="IPR018181">
    <property type="entry name" value="Heat_shock_70_CS"/>
</dbReference>
<dbReference type="InterPro" id="IPR042039">
    <property type="entry name" value="HscA_NBD"/>
</dbReference>
<dbReference type="InterPro" id="IPR029048">
    <property type="entry name" value="HSP70_C_sf"/>
</dbReference>
<dbReference type="InterPro" id="IPR029047">
    <property type="entry name" value="HSP70_peptide-bd_sf"/>
</dbReference>
<dbReference type="InterPro" id="IPR013126">
    <property type="entry name" value="Hsp_70_fam"/>
</dbReference>
<dbReference type="InterPro" id="IPR010236">
    <property type="entry name" value="ISC_FeS_clus_asmbl_HscA"/>
</dbReference>
<dbReference type="NCBIfam" id="TIGR01991">
    <property type="entry name" value="HscA"/>
    <property type="match status" value="1"/>
</dbReference>
<dbReference type="NCBIfam" id="NF003520">
    <property type="entry name" value="PRK05183.1"/>
    <property type="match status" value="1"/>
</dbReference>
<dbReference type="PANTHER" id="PTHR19375">
    <property type="entry name" value="HEAT SHOCK PROTEIN 70KDA"/>
    <property type="match status" value="1"/>
</dbReference>
<dbReference type="Pfam" id="PF00012">
    <property type="entry name" value="HSP70"/>
    <property type="match status" value="1"/>
</dbReference>
<dbReference type="PRINTS" id="PR00301">
    <property type="entry name" value="HEATSHOCK70"/>
</dbReference>
<dbReference type="SUPFAM" id="SSF53067">
    <property type="entry name" value="Actin-like ATPase domain"/>
    <property type="match status" value="2"/>
</dbReference>
<dbReference type="SUPFAM" id="SSF100934">
    <property type="entry name" value="Heat shock protein 70kD (HSP70), C-terminal subdomain"/>
    <property type="match status" value="1"/>
</dbReference>
<dbReference type="SUPFAM" id="SSF100920">
    <property type="entry name" value="Heat shock protein 70kD (HSP70), peptide-binding domain"/>
    <property type="match status" value="1"/>
</dbReference>
<dbReference type="PROSITE" id="PS00297">
    <property type="entry name" value="HSP70_1"/>
    <property type="match status" value="1"/>
</dbReference>
<dbReference type="PROSITE" id="PS00329">
    <property type="entry name" value="HSP70_2"/>
    <property type="match status" value="1"/>
</dbReference>
<dbReference type="PROSITE" id="PS01036">
    <property type="entry name" value="HSP70_3"/>
    <property type="match status" value="1"/>
</dbReference>
<name>HSCA_ECO81</name>
<keyword id="KW-0067">ATP-binding</keyword>
<keyword id="KW-0143">Chaperone</keyword>
<keyword id="KW-0547">Nucleotide-binding</keyword>
<feature type="chain" id="PRO_1000147716" description="Chaperone protein HscA">
    <location>
        <begin position="1"/>
        <end position="616"/>
    </location>
</feature>
<reference key="1">
    <citation type="journal article" date="2009" name="PLoS Genet.">
        <title>Organised genome dynamics in the Escherichia coli species results in highly diverse adaptive paths.</title>
        <authorList>
            <person name="Touchon M."/>
            <person name="Hoede C."/>
            <person name="Tenaillon O."/>
            <person name="Barbe V."/>
            <person name="Baeriswyl S."/>
            <person name="Bidet P."/>
            <person name="Bingen E."/>
            <person name="Bonacorsi S."/>
            <person name="Bouchier C."/>
            <person name="Bouvet O."/>
            <person name="Calteau A."/>
            <person name="Chiapello H."/>
            <person name="Clermont O."/>
            <person name="Cruveiller S."/>
            <person name="Danchin A."/>
            <person name="Diard M."/>
            <person name="Dossat C."/>
            <person name="Karoui M.E."/>
            <person name="Frapy E."/>
            <person name="Garry L."/>
            <person name="Ghigo J.M."/>
            <person name="Gilles A.M."/>
            <person name="Johnson J."/>
            <person name="Le Bouguenec C."/>
            <person name="Lescat M."/>
            <person name="Mangenot S."/>
            <person name="Martinez-Jehanne V."/>
            <person name="Matic I."/>
            <person name="Nassif X."/>
            <person name="Oztas S."/>
            <person name="Petit M.A."/>
            <person name="Pichon C."/>
            <person name="Rouy Z."/>
            <person name="Ruf C.S."/>
            <person name="Schneider D."/>
            <person name="Tourret J."/>
            <person name="Vacherie B."/>
            <person name="Vallenet D."/>
            <person name="Medigue C."/>
            <person name="Rocha E.P.C."/>
            <person name="Denamur E."/>
        </authorList>
    </citation>
    <scope>NUCLEOTIDE SEQUENCE [LARGE SCALE GENOMIC DNA]</scope>
    <source>
        <strain>ED1a</strain>
    </source>
</reference>